<accession>Q831V1</accession>
<proteinExistence type="evidence at protein level"/>
<feature type="chain" id="PRO_1000053924" description="Uridylate kinase">
    <location>
        <begin position="1"/>
        <end position="240"/>
    </location>
</feature>
<feature type="region of interest" description="Involved in allosteric activation by GTP" evidence="2">
    <location>
        <begin position="20"/>
        <end position="25"/>
    </location>
</feature>
<feature type="binding site" evidence="1">
    <location>
        <begin position="12"/>
        <end position="15"/>
    </location>
    <ligand>
        <name>ATP</name>
        <dbReference type="ChEBI" id="CHEBI:30616"/>
    </ligand>
</feature>
<feature type="binding site" evidence="1">
    <location>
        <position position="54"/>
    </location>
    <ligand>
        <name>UMP</name>
        <dbReference type="ChEBI" id="CHEBI:57865"/>
    </ligand>
</feature>
<feature type="binding site" evidence="1">
    <location>
        <position position="55"/>
    </location>
    <ligand>
        <name>ATP</name>
        <dbReference type="ChEBI" id="CHEBI:30616"/>
    </ligand>
</feature>
<feature type="binding site" evidence="1">
    <location>
        <position position="59"/>
    </location>
    <ligand>
        <name>ATP</name>
        <dbReference type="ChEBI" id="CHEBI:30616"/>
    </ligand>
</feature>
<feature type="binding site" evidence="1">
    <location>
        <position position="74"/>
    </location>
    <ligand>
        <name>UMP</name>
        <dbReference type="ChEBI" id="CHEBI:57865"/>
    </ligand>
</feature>
<feature type="binding site" evidence="1">
    <location>
        <begin position="135"/>
        <end position="142"/>
    </location>
    <ligand>
        <name>UMP</name>
        <dbReference type="ChEBI" id="CHEBI:57865"/>
    </ligand>
</feature>
<feature type="binding site" evidence="1">
    <location>
        <position position="163"/>
    </location>
    <ligand>
        <name>ATP</name>
        <dbReference type="ChEBI" id="CHEBI:30616"/>
    </ligand>
</feature>
<feature type="binding site" evidence="1">
    <location>
        <position position="169"/>
    </location>
    <ligand>
        <name>ATP</name>
        <dbReference type="ChEBI" id="CHEBI:30616"/>
    </ligand>
</feature>
<feature type="binding site" evidence="1">
    <location>
        <position position="172"/>
    </location>
    <ligand>
        <name>ATP</name>
        <dbReference type="ChEBI" id="CHEBI:30616"/>
    </ligand>
</feature>
<sequence>MVKPKYQRVVLKLSGEALAGEDGFGIKPPVIKEIVQEIKEVHELGIEMAIVVGGGNIWRGQIGAQMGMERAQADYMGMLATVMNALALQDTLENLGVPTRVQTSIEMRQIAEPYIRRRAERHLEKGRVVIFAGGTGNPYFSTDTTAALRAAEVDADVILMAKNNVDGVYSADPRVDETATKFEELTHLDVISKGLQVMDSTASSLSMDNDIPLVVFNLNEAGNIRRAILGENIGTTVRGK</sequence>
<comment type="function">
    <text evidence="3">Catalyzes the reversible phosphorylation of UMP to UDP.</text>
</comment>
<comment type="catalytic activity">
    <reaction>
        <text>UMP + ATP = UDP + ADP</text>
        <dbReference type="Rhea" id="RHEA:24400"/>
        <dbReference type="ChEBI" id="CHEBI:30616"/>
        <dbReference type="ChEBI" id="CHEBI:57865"/>
        <dbReference type="ChEBI" id="CHEBI:58223"/>
        <dbReference type="ChEBI" id="CHEBI:456216"/>
        <dbReference type="EC" id="2.7.4.22"/>
    </reaction>
</comment>
<comment type="activity regulation">
    <text evidence="3">Allosterically activated by GTP. Probably inhibited by UTP.</text>
</comment>
<comment type="pathway">
    <text>Pyrimidine metabolism; CTP biosynthesis via de novo pathway; UDP from UMP (UMPK route): step 1/1.</text>
</comment>
<comment type="subunit">
    <text evidence="3">Homohexamer.</text>
</comment>
<comment type="subcellular location">
    <subcellularLocation>
        <location evidence="1">Cytoplasm</location>
    </subcellularLocation>
</comment>
<comment type="similarity">
    <text evidence="4">Belongs to the UMP kinase family.</text>
</comment>
<organism>
    <name type="scientific">Enterococcus faecalis (strain ATCC 700802 / V583)</name>
    <dbReference type="NCBI Taxonomy" id="226185"/>
    <lineage>
        <taxon>Bacteria</taxon>
        <taxon>Bacillati</taxon>
        <taxon>Bacillota</taxon>
        <taxon>Bacilli</taxon>
        <taxon>Lactobacillales</taxon>
        <taxon>Enterococcaceae</taxon>
        <taxon>Enterococcus</taxon>
    </lineage>
</organism>
<evidence type="ECO:0000250" key="1"/>
<evidence type="ECO:0000255" key="2"/>
<evidence type="ECO:0000269" key="3">
    <source>
    </source>
</evidence>
<evidence type="ECO:0000305" key="4"/>
<protein>
    <recommendedName>
        <fullName>Uridylate kinase</fullName>
        <shortName>UK</shortName>
        <ecNumber>2.7.4.22</ecNumber>
    </recommendedName>
    <alternativeName>
        <fullName>Uridine monophosphate kinase</fullName>
        <shortName>UMP kinase</shortName>
        <shortName>UMPK</shortName>
    </alternativeName>
</protein>
<gene>
    <name type="primary">pyrH</name>
    <name type="ordered locus">EF_2396</name>
</gene>
<dbReference type="EC" id="2.7.4.22"/>
<dbReference type="EMBL" id="AE016830">
    <property type="protein sequence ID" value="AAO82117.1"/>
    <property type="molecule type" value="Genomic_DNA"/>
</dbReference>
<dbReference type="RefSeq" id="NP_816047.1">
    <property type="nucleotide sequence ID" value="NC_004668.1"/>
</dbReference>
<dbReference type="RefSeq" id="WP_002356761.1">
    <property type="nucleotide sequence ID" value="NZ_KE136528.1"/>
</dbReference>
<dbReference type="SMR" id="Q831V1"/>
<dbReference type="STRING" id="226185.EF_2396"/>
<dbReference type="EnsemblBacteria" id="AAO82117">
    <property type="protein sequence ID" value="AAO82117"/>
    <property type="gene ID" value="EF_2396"/>
</dbReference>
<dbReference type="GeneID" id="60894449"/>
<dbReference type="KEGG" id="efa:EF2396"/>
<dbReference type="PATRIC" id="fig|226185.9.peg.2238"/>
<dbReference type="eggNOG" id="COG0528">
    <property type="taxonomic scope" value="Bacteria"/>
</dbReference>
<dbReference type="HOGENOM" id="CLU_033861_0_0_9"/>
<dbReference type="UniPathway" id="UPA00159">
    <property type="reaction ID" value="UER00275"/>
</dbReference>
<dbReference type="Proteomes" id="UP000001415">
    <property type="component" value="Chromosome"/>
</dbReference>
<dbReference type="GO" id="GO:0005737">
    <property type="term" value="C:cytoplasm"/>
    <property type="evidence" value="ECO:0007669"/>
    <property type="project" value="UniProtKB-SubCell"/>
</dbReference>
<dbReference type="GO" id="GO:0005524">
    <property type="term" value="F:ATP binding"/>
    <property type="evidence" value="ECO:0007669"/>
    <property type="project" value="UniProtKB-KW"/>
</dbReference>
<dbReference type="GO" id="GO:0033862">
    <property type="term" value="F:UMP kinase activity"/>
    <property type="evidence" value="ECO:0007669"/>
    <property type="project" value="UniProtKB-EC"/>
</dbReference>
<dbReference type="GO" id="GO:0044210">
    <property type="term" value="P:'de novo' CTP biosynthetic process"/>
    <property type="evidence" value="ECO:0007669"/>
    <property type="project" value="UniProtKB-UniRule"/>
</dbReference>
<dbReference type="GO" id="GO:0006225">
    <property type="term" value="P:UDP biosynthetic process"/>
    <property type="evidence" value="ECO:0007669"/>
    <property type="project" value="TreeGrafter"/>
</dbReference>
<dbReference type="CDD" id="cd04254">
    <property type="entry name" value="AAK_UMPK-PyrH-Ec"/>
    <property type="match status" value="1"/>
</dbReference>
<dbReference type="FunFam" id="3.40.1160.10:FF:000001">
    <property type="entry name" value="Uridylate kinase"/>
    <property type="match status" value="1"/>
</dbReference>
<dbReference type="Gene3D" id="3.40.1160.10">
    <property type="entry name" value="Acetylglutamate kinase-like"/>
    <property type="match status" value="1"/>
</dbReference>
<dbReference type="HAMAP" id="MF_01220_B">
    <property type="entry name" value="PyrH_B"/>
    <property type="match status" value="1"/>
</dbReference>
<dbReference type="InterPro" id="IPR036393">
    <property type="entry name" value="AceGlu_kinase-like_sf"/>
</dbReference>
<dbReference type="InterPro" id="IPR001048">
    <property type="entry name" value="Asp/Glu/Uridylate_kinase"/>
</dbReference>
<dbReference type="InterPro" id="IPR011817">
    <property type="entry name" value="Uridylate_kinase"/>
</dbReference>
<dbReference type="InterPro" id="IPR015963">
    <property type="entry name" value="Uridylate_kinase_bac"/>
</dbReference>
<dbReference type="NCBIfam" id="TIGR02075">
    <property type="entry name" value="pyrH_bact"/>
    <property type="match status" value="1"/>
</dbReference>
<dbReference type="PANTHER" id="PTHR42833">
    <property type="entry name" value="URIDYLATE KINASE"/>
    <property type="match status" value="1"/>
</dbReference>
<dbReference type="PANTHER" id="PTHR42833:SF4">
    <property type="entry name" value="URIDYLATE KINASE PUMPKIN, CHLOROPLASTIC"/>
    <property type="match status" value="1"/>
</dbReference>
<dbReference type="Pfam" id="PF00696">
    <property type="entry name" value="AA_kinase"/>
    <property type="match status" value="1"/>
</dbReference>
<dbReference type="PIRSF" id="PIRSF005650">
    <property type="entry name" value="Uridylate_kin"/>
    <property type="match status" value="1"/>
</dbReference>
<dbReference type="SUPFAM" id="SSF53633">
    <property type="entry name" value="Carbamate kinase-like"/>
    <property type="match status" value="1"/>
</dbReference>
<name>PYRH_ENTFA</name>
<reference key="1">
    <citation type="journal article" date="2003" name="Science">
        <title>Role of mobile DNA in the evolution of vancomycin-resistant Enterococcus faecalis.</title>
        <authorList>
            <person name="Paulsen I.T."/>
            <person name="Banerjei L."/>
            <person name="Myers G.S.A."/>
            <person name="Nelson K.E."/>
            <person name="Seshadri R."/>
            <person name="Read T.D."/>
            <person name="Fouts D.E."/>
            <person name="Eisen J.A."/>
            <person name="Gill S.R."/>
            <person name="Heidelberg J.F."/>
            <person name="Tettelin H."/>
            <person name="Dodson R.J."/>
            <person name="Umayam L.A."/>
            <person name="Brinkac L.M."/>
            <person name="Beanan M.J."/>
            <person name="Daugherty S.C."/>
            <person name="DeBoy R.T."/>
            <person name="Durkin S.A."/>
            <person name="Kolonay J.F."/>
            <person name="Madupu R."/>
            <person name="Nelson W.C."/>
            <person name="Vamathevan J.J."/>
            <person name="Tran B."/>
            <person name="Upton J."/>
            <person name="Hansen T."/>
            <person name="Shetty J."/>
            <person name="Khouri H.M."/>
            <person name="Utterback T.R."/>
            <person name="Radune D."/>
            <person name="Ketchum K.A."/>
            <person name="Dougherty B.A."/>
            <person name="Fraser C.M."/>
        </authorList>
    </citation>
    <scope>NUCLEOTIDE SEQUENCE [LARGE SCALE GENOMIC DNA]</scope>
    <source>
        <strain>ATCC 700802 / V583</strain>
    </source>
</reference>
<reference key="2">
    <citation type="journal article" date="2007" name="J. Biol. Chem.">
        <title>Regulatory mechanisms differ in UMP kinases from Gram-negative and Gram-positive bacteria.</title>
        <authorList>
            <person name="Evrin C."/>
            <person name="Straut M."/>
            <person name="Slavova-Azmanova N."/>
            <person name="Bucurenci N."/>
            <person name="Onu A."/>
            <person name="Assairi L."/>
            <person name="Ionescu M."/>
            <person name="Palibroda N."/>
            <person name="Barzu O."/>
            <person name="Gilles A.-M."/>
        </authorList>
    </citation>
    <scope>FUNCTION</scope>
    <scope>ACTIVITY REGULATION</scope>
    <scope>IDENTIFICATION BY MASS SPECTROMETRY</scope>
    <scope>SUBUNIT</scope>
</reference>
<keyword id="KW-0021">Allosteric enzyme</keyword>
<keyword id="KW-0067">ATP-binding</keyword>
<keyword id="KW-0963">Cytoplasm</keyword>
<keyword id="KW-0418">Kinase</keyword>
<keyword id="KW-0547">Nucleotide-binding</keyword>
<keyword id="KW-0665">Pyrimidine biosynthesis</keyword>
<keyword id="KW-1185">Reference proteome</keyword>
<keyword id="KW-0808">Transferase</keyword>